<evidence type="ECO:0000255" key="1">
    <source>
        <dbReference type="HAMAP-Rule" id="MF_01342"/>
    </source>
</evidence>
<evidence type="ECO:0000256" key="2">
    <source>
        <dbReference type="SAM" id="MobiDB-lite"/>
    </source>
</evidence>
<evidence type="ECO:0000305" key="3"/>
<dbReference type="EMBL" id="AL939121">
    <property type="protein sequence ID" value="CAB82077.1"/>
    <property type="molecule type" value="Genomic_DNA"/>
</dbReference>
<dbReference type="RefSeq" id="NP_628868.1">
    <property type="nucleotide sequence ID" value="NC_003888.3"/>
</dbReference>
<dbReference type="RefSeq" id="WP_003974260.1">
    <property type="nucleotide sequence ID" value="NZ_VNID01000016.1"/>
</dbReference>
<dbReference type="SMR" id="Q9L0D3"/>
<dbReference type="FunCoup" id="Q9L0D3">
    <property type="interactions" value="376"/>
</dbReference>
<dbReference type="STRING" id="100226.gene:17762358"/>
<dbReference type="PaxDb" id="100226-SCO4709"/>
<dbReference type="GeneID" id="95503899"/>
<dbReference type="KEGG" id="sco:SCO4709"/>
<dbReference type="PATRIC" id="fig|100226.15.peg.4780"/>
<dbReference type="eggNOG" id="COG0197">
    <property type="taxonomic scope" value="Bacteria"/>
</dbReference>
<dbReference type="HOGENOM" id="CLU_078858_2_1_11"/>
<dbReference type="InParanoid" id="Q9L0D3"/>
<dbReference type="OrthoDB" id="9802589at2"/>
<dbReference type="PhylomeDB" id="Q9L0D3"/>
<dbReference type="Proteomes" id="UP000001973">
    <property type="component" value="Chromosome"/>
</dbReference>
<dbReference type="GO" id="GO:0022625">
    <property type="term" value="C:cytosolic large ribosomal subunit"/>
    <property type="evidence" value="ECO:0000318"/>
    <property type="project" value="GO_Central"/>
</dbReference>
<dbReference type="GO" id="GO:0019843">
    <property type="term" value="F:rRNA binding"/>
    <property type="evidence" value="ECO:0000318"/>
    <property type="project" value="GO_Central"/>
</dbReference>
<dbReference type="GO" id="GO:0003735">
    <property type="term" value="F:structural constituent of ribosome"/>
    <property type="evidence" value="ECO:0000318"/>
    <property type="project" value="GO_Central"/>
</dbReference>
<dbReference type="GO" id="GO:0000049">
    <property type="term" value="F:tRNA binding"/>
    <property type="evidence" value="ECO:0007669"/>
    <property type="project" value="UniProtKB-KW"/>
</dbReference>
<dbReference type="GO" id="GO:0006412">
    <property type="term" value="P:translation"/>
    <property type="evidence" value="ECO:0007669"/>
    <property type="project" value="UniProtKB-UniRule"/>
</dbReference>
<dbReference type="CDD" id="cd01433">
    <property type="entry name" value="Ribosomal_L16_L10e"/>
    <property type="match status" value="1"/>
</dbReference>
<dbReference type="FunFam" id="3.90.1170.10:FF:000001">
    <property type="entry name" value="50S ribosomal protein L16"/>
    <property type="match status" value="1"/>
</dbReference>
<dbReference type="Gene3D" id="3.90.1170.10">
    <property type="entry name" value="Ribosomal protein L10e/L16"/>
    <property type="match status" value="1"/>
</dbReference>
<dbReference type="HAMAP" id="MF_01342">
    <property type="entry name" value="Ribosomal_uL16"/>
    <property type="match status" value="1"/>
</dbReference>
<dbReference type="InterPro" id="IPR047873">
    <property type="entry name" value="Ribosomal_uL16"/>
</dbReference>
<dbReference type="InterPro" id="IPR000114">
    <property type="entry name" value="Ribosomal_uL16_bact-type"/>
</dbReference>
<dbReference type="InterPro" id="IPR020798">
    <property type="entry name" value="Ribosomal_uL16_CS"/>
</dbReference>
<dbReference type="InterPro" id="IPR016180">
    <property type="entry name" value="Ribosomal_uL16_dom"/>
</dbReference>
<dbReference type="InterPro" id="IPR036920">
    <property type="entry name" value="Ribosomal_uL16_sf"/>
</dbReference>
<dbReference type="NCBIfam" id="TIGR01164">
    <property type="entry name" value="rplP_bact"/>
    <property type="match status" value="1"/>
</dbReference>
<dbReference type="PANTHER" id="PTHR12220">
    <property type="entry name" value="50S/60S RIBOSOMAL PROTEIN L16"/>
    <property type="match status" value="1"/>
</dbReference>
<dbReference type="PANTHER" id="PTHR12220:SF13">
    <property type="entry name" value="LARGE RIBOSOMAL SUBUNIT PROTEIN UL16M"/>
    <property type="match status" value="1"/>
</dbReference>
<dbReference type="Pfam" id="PF00252">
    <property type="entry name" value="Ribosomal_L16"/>
    <property type="match status" value="1"/>
</dbReference>
<dbReference type="PRINTS" id="PR00060">
    <property type="entry name" value="RIBOSOMALL16"/>
</dbReference>
<dbReference type="SUPFAM" id="SSF54686">
    <property type="entry name" value="Ribosomal protein L16p/L10e"/>
    <property type="match status" value="1"/>
</dbReference>
<dbReference type="PROSITE" id="PS00586">
    <property type="entry name" value="RIBOSOMAL_L16_1"/>
    <property type="match status" value="1"/>
</dbReference>
<dbReference type="PROSITE" id="PS00701">
    <property type="entry name" value="RIBOSOMAL_L16_2"/>
    <property type="match status" value="1"/>
</dbReference>
<gene>
    <name evidence="1" type="primary">rplP</name>
    <name type="ordered locus">SCO4709</name>
    <name type="ORF">SCD31.34</name>
</gene>
<sequence length="139" mass="15844">MLIPRRVKHRKQHHPKRRGMAKGGTQVAFGEYGIQALTPAYVTNRQIEAARIAMTRHIKRGGKVWINIYPDRPLTKKPAETRMGSGKGSPEWWIANVHPGRVMFELSYPNEKIAREALTRAAHKLPMKCRIVKREAGEA</sequence>
<reference key="1">
    <citation type="journal article" date="2002" name="Nature">
        <title>Complete genome sequence of the model actinomycete Streptomyces coelicolor A3(2).</title>
        <authorList>
            <person name="Bentley S.D."/>
            <person name="Chater K.F."/>
            <person name="Cerdeno-Tarraga A.-M."/>
            <person name="Challis G.L."/>
            <person name="Thomson N.R."/>
            <person name="James K.D."/>
            <person name="Harris D.E."/>
            <person name="Quail M.A."/>
            <person name="Kieser H."/>
            <person name="Harper D."/>
            <person name="Bateman A."/>
            <person name="Brown S."/>
            <person name="Chandra G."/>
            <person name="Chen C.W."/>
            <person name="Collins M."/>
            <person name="Cronin A."/>
            <person name="Fraser A."/>
            <person name="Goble A."/>
            <person name="Hidalgo J."/>
            <person name="Hornsby T."/>
            <person name="Howarth S."/>
            <person name="Huang C.-H."/>
            <person name="Kieser T."/>
            <person name="Larke L."/>
            <person name="Murphy L.D."/>
            <person name="Oliver K."/>
            <person name="O'Neil S."/>
            <person name="Rabbinowitsch E."/>
            <person name="Rajandream M.A."/>
            <person name="Rutherford K.M."/>
            <person name="Rutter S."/>
            <person name="Seeger K."/>
            <person name="Saunders D."/>
            <person name="Sharp S."/>
            <person name="Squares R."/>
            <person name="Squares S."/>
            <person name="Taylor K."/>
            <person name="Warren T."/>
            <person name="Wietzorrek A."/>
            <person name="Woodward J.R."/>
            <person name="Barrell B.G."/>
            <person name="Parkhill J."/>
            <person name="Hopwood D.A."/>
        </authorList>
    </citation>
    <scope>NUCLEOTIDE SEQUENCE [LARGE SCALE GENOMIC DNA]</scope>
    <source>
        <strain>ATCC BAA-471 / A3(2) / M145</strain>
    </source>
</reference>
<comment type="function">
    <text evidence="1">Binds 23S rRNA and is also seen to make contacts with the A and possibly P site tRNAs.</text>
</comment>
<comment type="subunit">
    <text evidence="1">Part of the 50S ribosomal subunit.</text>
</comment>
<comment type="similarity">
    <text evidence="1">Belongs to the universal ribosomal protein uL16 family.</text>
</comment>
<organism>
    <name type="scientific">Streptomyces coelicolor (strain ATCC BAA-471 / A3(2) / M145)</name>
    <dbReference type="NCBI Taxonomy" id="100226"/>
    <lineage>
        <taxon>Bacteria</taxon>
        <taxon>Bacillati</taxon>
        <taxon>Actinomycetota</taxon>
        <taxon>Actinomycetes</taxon>
        <taxon>Kitasatosporales</taxon>
        <taxon>Streptomycetaceae</taxon>
        <taxon>Streptomyces</taxon>
        <taxon>Streptomyces albidoflavus group</taxon>
    </lineage>
</organism>
<accession>Q9L0D3</accession>
<proteinExistence type="inferred from homology"/>
<keyword id="KW-1185">Reference proteome</keyword>
<keyword id="KW-0687">Ribonucleoprotein</keyword>
<keyword id="KW-0689">Ribosomal protein</keyword>
<keyword id="KW-0694">RNA-binding</keyword>
<keyword id="KW-0699">rRNA-binding</keyword>
<keyword id="KW-0820">tRNA-binding</keyword>
<feature type="chain" id="PRO_0000062227" description="Large ribosomal subunit protein uL16">
    <location>
        <begin position="1"/>
        <end position="139"/>
    </location>
</feature>
<feature type="region of interest" description="Disordered" evidence="2">
    <location>
        <begin position="1"/>
        <end position="22"/>
    </location>
</feature>
<feature type="compositionally biased region" description="Basic residues" evidence="2">
    <location>
        <begin position="1"/>
        <end position="20"/>
    </location>
</feature>
<protein>
    <recommendedName>
        <fullName evidence="1">Large ribosomal subunit protein uL16</fullName>
    </recommendedName>
    <alternativeName>
        <fullName evidence="3">50S ribosomal protein L16</fullName>
    </alternativeName>
</protein>
<name>RL16_STRCO</name>